<gene>
    <name type="primary">yozE</name>
    <name type="ordered locus">BSU19680</name>
</gene>
<reference key="1">
    <citation type="journal article" date="1997" name="Nature">
        <title>The complete genome sequence of the Gram-positive bacterium Bacillus subtilis.</title>
        <authorList>
            <person name="Kunst F."/>
            <person name="Ogasawara N."/>
            <person name="Moszer I."/>
            <person name="Albertini A.M."/>
            <person name="Alloni G."/>
            <person name="Azevedo V."/>
            <person name="Bertero M.G."/>
            <person name="Bessieres P."/>
            <person name="Bolotin A."/>
            <person name="Borchert S."/>
            <person name="Borriss R."/>
            <person name="Boursier L."/>
            <person name="Brans A."/>
            <person name="Braun M."/>
            <person name="Brignell S.C."/>
            <person name="Bron S."/>
            <person name="Brouillet S."/>
            <person name="Bruschi C.V."/>
            <person name="Caldwell B."/>
            <person name="Capuano V."/>
            <person name="Carter N.M."/>
            <person name="Choi S.-K."/>
            <person name="Codani J.-J."/>
            <person name="Connerton I.F."/>
            <person name="Cummings N.J."/>
            <person name="Daniel R.A."/>
            <person name="Denizot F."/>
            <person name="Devine K.M."/>
            <person name="Duesterhoeft A."/>
            <person name="Ehrlich S.D."/>
            <person name="Emmerson P.T."/>
            <person name="Entian K.-D."/>
            <person name="Errington J."/>
            <person name="Fabret C."/>
            <person name="Ferrari E."/>
            <person name="Foulger D."/>
            <person name="Fritz C."/>
            <person name="Fujita M."/>
            <person name="Fujita Y."/>
            <person name="Fuma S."/>
            <person name="Galizzi A."/>
            <person name="Galleron N."/>
            <person name="Ghim S.-Y."/>
            <person name="Glaser P."/>
            <person name="Goffeau A."/>
            <person name="Golightly E.J."/>
            <person name="Grandi G."/>
            <person name="Guiseppi G."/>
            <person name="Guy B.J."/>
            <person name="Haga K."/>
            <person name="Haiech J."/>
            <person name="Harwood C.R."/>
            <person name="Henaut A."/>
            <person name="Hilbert H."/>
            <person name="Holsappel S."/>
            <person name="Hosono S."/>
            <person name="Hullo M.-F."/>
            <person name="Itaya M."/>
            <person name="Jones L.-M."/>
            <person name="Joris B."/>
            <person name="Karamata D."/>
            <person name="Kasahara Y."/>
            <person name="Klaerr-Blanchard M."/>
            <person name="Klein C."/>
            <person name="Kobayashi Y."/>
            <person name="Koetter P."/>
            <person name="Koningstein G."/>
            <person name="Krogh S."/>
            <person name="Kumano M."/>
            <person name="Kurita K."/>
            <person name="Lapidus A."/>
            <person name="Lardinois S."/>
            <person name="Lauber J."/>
            <person name="Lazarevic V."/>
            <person name="Lee S.-M."/>
            <person name="Levine A."/>
            <person name="Liu H."/>
            <person name="Masuda S."/>
            <person name="Mauel C."/>
            <person name="Medigue C."/>
            <person name="Medina N."/>
            <person name="Mellado R.P."/>
            <person name="Mizuno M."/>
            <person name="Moestl D."/>
            <person name="Nakai S."/>
            <person name="Noback M."/>
            <person name="Noone D."/>
            <person name="O'Reilly M."/>
            <person name="Ogawa K."/>
            <person name="Ogiwara A."/>
            <person name="Oudega B."/>
            <person name="Park S.-H."/>
            <person name="Parro V."/>
            <person name="Pohl T.M."/>
            <person name="Portetelle D."/>
            <person name="Porwollik S."/>
            <person name="Prescott A.M."/>
            <person name="Presecan E."/>
            <person name="Pujic P."/>
            <person name="Purnelle B."/>
            <person name="Rapoport G."/>
            <person name="Rey M."/>
            <person name="Reynolds S."/>
            <person name="Rieger M."/>
            <person name="Rivolta C."/>
            <person name="Rocha E."/>
            <person name="Roche B."/>
            <person name="Rose M."/>
            <person name="Sadaie Y."/>
            <person name="Sato T."/>
            <person name="Scanlan E."/>
            <person name="Schleich S."/>
            <person name="Schroeter R."/>
            <person name="Scoffone F."/>
            <person name="Sekiguchi J."/>
            <person name="Sekowska A."/>
            <person name="Seror S.J."/>
            <person name="Serror P."/>
            <person name="Shin B.-S."/>
            <person name="Soldo B."/>
            <person name="Sorokin A."/>
            <person name="Tacconi E."/>
            <person name="Takagi T."/>
            <person name="Takahashi H."/>
            <person name="Takemaru K."/>
            <person name="Takeuchi M."/>
            <person name="Tamakoshi A."/>
            <person name="Tanaka T."/>
            <person name="Terpstra P."/>
            <person name="Tognoni A."/>
            <person name="Tosato V."/>
            <person name="Uchiyama S."/>
            <person name="Vandenbol M."/>
            <person name="Vannier F."/>
            <person name="Vassarotti A."/>
            <person name="Viari A."/>
            <person name="Wambutt R."/>
            <person name="Wedler E."/>
            <person name="Wedler H."/>
            <person name="Weitzenegger T."/>
            <person name="Winters P."/>
            <person name="Wipat A."/>
            <person name="Yamamoto H."/>
            <person name="Yamane K."/>
            <person name="Yasumoto K."/>
            <person name="Yata K."/>
            <person name="Yoshida K."/>
            <person name="Yoshikawa H.-F."/>
            <person name="Zumstein E."/>
            <person name="Yoshikawa H."/>
            <person name="Danchin A."/>
        </authorList>
    </citation>
    <scope>NUCLEOTIDE SEQUENCE [LARGE SCALE GENOMIC DNA]</scope>
    <source>
        <strain>168</strain>
    </source>
</reference>
<reference key="2">
    <citation type="submission" date="2006-02" db="PDB data bank">
        <title>Solution NMR structure of the UPF0346 protein yozE from Bacillus subtilis. Northeast structural genomics target SR391.</title>
        <authorList>
            <consortium name="Northeast structural genomics consortium (NESG)"/>
        </authorList>
    </citation>
    <scope>STRUCTURE BY NMR</scope>
</reference>
<accession>O31864</accession>
<dbReference type="EMBL" id="AL009126">
    <property type="protein sequence ID" value="CAB13859.1"/>
    <property type="molecule type" value="Genomic_DNA"/>
</dbReference>
<dbReference type="PIR" id="A69931">
    <property type="entry name" value="A69931"/>
</dbReference>
<dbReference type="RefSeq" id="NP_389849.1">
    <property type="nucleotide sequence ID" value="NC_000964.3"/>
</dbReference>
<dbReference type="RefSeq" id="WP_003231160.1">
    <property type="nucleotide sequence ID" value="NZ_OZ025638.1"/>
</dbReference>
<dbReference type="PDB" id="2FJ6">
    <property type="method" value="NMR"/>
    <property type="chains" value="A=1-74"/>
</dbReference>
<dbReference type="PDBsum" id="2FJ6"/>
<dbReference type="BMRB" id="O31864"/>
<dbReference type="SMR" id="O31864"/>
<dbReference type="FunCoup" id="O31864">
    <property type="interactions" value="23"/>
</dbReference>
<dbReference type="STRING" id="224308.BSU19680"/>
<dbReference type="PaxDb" id="224308-BSU19680"/>
<dbReference type="DNASU" id="940055"/>
<dbReference type="EnsemblBacteria" id="CAB13859">
    <property type="protein sequence ID" value="CAB13859"/>
    <property type="gene ID" value="BSU_19680"/>
</dbReference>
<dbReference type="GeneID" id="940055"/>
<dbReference type="KEGG" id="bsu:BSU19680"/>
<dbReference type="PATRIC" id="fig|224308.179.peg.2154"/>
<dbReference type="eggNOG" id="COG4479">
    <property type="taxonomic scope" value="Bacteria"/>
</dbReference>
<dbReference type="InParanoid" id="O31864"/>
<dbReference type="OrthoDB" id="2242851at2"/>
<dbReference type="PhylomeDB" id="O31864"/>
<dbReference type="BioCyc" id="BSUB:BSU19680-MONOMER"/>
<dbReference type="EvolutionaryTrace" id="O31864"/>
<dbReference type="Proteomes" id="UP000001570">
    <property type="component" value="Chromosome"/>
</dbReference>
<dbReference type="Gene3D" id="1.10.150.260">
    <property type="entry name" value="YozE SAM-like"/>
    <property type="match status" value="1"/>
</dbReference>
<dbReference type="HAMAP" id="MF_01538">
    <property type="entry name" value="UPF0346"/>
    <property type="match status" value="1"/>
</dbReference>
<dbReference type="InterPro" id="IPR010673">
    <property type="entry name" value="UPF0346"/>
</dbReference>
<dbReference type="InterPro" id="IPR023089">
    <property type="entry name" value="YozE_SAM-like"/>
</dbReference>
<dbReference type="InterPro" id="IPR036806">
    <property type="entry name" value="YozE_SAM-like_sf"/>
</dbReference>
<dbReference type="NCBIfam" id="NF010193">
    <property type="entry name" value="PRK13672.1"/>
    <property type="match status" value="1"/>
</dbReference>
<dbReference type="Pfam" id="PF06855">
    <property type="entry name" value="YozE_SAM_like"/>
    <property type="match status" value="1"/>
</dbReference>
<dbReference type="PIRSF" id="PIRSF037262">
    <property type="entry name" value="UCP037262"/>
    <property type="match status" value="1"/>
</dbReference>
<dbReference type="SUPFAM" id="SSF140652">
    <property type="entry name" value="YozE-like"/>
    <property type="match status" value="1"/>
</dbReference>
<evidence type="ECO:0000305" key="1"/>
<evidence type="ECO:0007829" key="2">
    <source>
        <dbReference type="PDB" id="2FJ6"/>
    </source>
</evidence>
<protein>
    <recommendedName>
        <fullName>UPF0346 protein YozE</fullName>
    </recommendedName>
</protein>
<sequence>MKSFYHYLLKYRHPKPKDSISEFANQAYEDHSFPKTSTDYHEISSYLELNADYLHTMATFDEAWDQYESEVHGR</sequence>
<comment type="similarity">
    <text evidence="1">Belongs to the UPF0346 family.</text>
</comment>
<feature type="chain" id="PRO_0000164270" description="UPF0346 protein YozE">
    <location>
        <begin position="1"/>
        <end position="74"/>
    </location>
</feature>
<feature type="helix" evidence="2">
    <location>
        <begin position="4"/>
        <end position="9"/>
    </location>
</feature>
<feature type="helix" evidence="2">
    <location>
        <begin position="19"/>
        <end position="28"/>
    </location>
</feature>
<feature type="helix" evidence="2">
    <location>
        <begin position="40"/>
        <end position="48"/>
    </location>
</feature>
<feature type="helix" evidence="2">
    <location>
        <begin position="51"/>
        <end position="54"/>
    </location>
</feature>
<feature type="helix" evidence="2">
    <location>
        <begin position="57"/>
        <end position="71"/>
    </location>
</feature>
<feature type="turn" evidence="2">
    <location>
        <begin position="72"/>
        <end position="74"/>
    </location>
</feature>
<proteinExistence type="evidence at protein level"/>
<name>YOZE_BACSU</name>
<organism>
    <name type="scientific">Bacillus subtilis (strain 168)</name>
    <dbReference type="NCBI Taxonomy" id="224308"/>
    <lineage>
        <taxon>Bacteria</taxon>
        <taxon>Bacillati</taxon>
        <taxon>Bacillota</taxon>
        <taxon>Bacilli</taxon>
        <taxon>Bacillales</taxon>
        <taxon>Bacillaceae</taxon>
        <taxon>Bacillus</taxon>
    </lineage>
</organism>
<keyword id="KW-0002">3D-structure</keyword>
<keyword id="KW-1185">Reference proteome</keyword>